<comment type="function">
    <text evidence="2">Involved in the translocation of tetra- and pentapeptides across the cellular membrane in an energy-dependent manner.</text>
</comment>
<comment type="subcellular location">
    <subcellularLocation>
        <location evidence="3">Membrane</location>
        <topology evidence="3">Multi-pass membrane protein</topology>
    </subcellularLocation>
</comment>
<comment type="tissue specificity">
    <text evidence="2">Expressed predominantly in flowers, and at a very low level in leaves and roots.</text>
</comment>
<comment type="similarity">
    <text evidence="3">Belongs to the oligopeptide OPT transporter (TC 2.A.67.1) family.</text>
</comment>
<name>OPT5_ARATH</name>
<evidence type="ECO:0000255" key="1"/>
<evidence type="ECO:0000269" key="2">
    <source>
    </source>
</evidence>
<evidence type="ECO:0000305" key="3"/>
<dbReference type="EMBL" id="AL078465">
    <property type="protein sequence ID" value="CAB43855.1"/>
    <property type="molecule type" value="Genomic_DNA"/>
</dbReference>
<dbReference type="EMBL" id="AL161565">
    <property type="protein sequence ID" value="CAB79514.1"/>
    <property type="molecule type" value="Genomic_DNA"/>
</dbReference>
<dbReference type="EMBL" id="CP002687">
    <property type="protein sequence ID" value="AEE85224.1"/>
    <property type="molecule type" value="Genomic_DNA"/>
</dbReference>
<dbReference type="EMBL" id="AY051048">
    <property type="protein sequence ID" value="AAK93725.1"/>
    <property type="molecule type" value="mRNA"/>
</dbReference>
<dbReference type="EMBL" id="AF360292">
    <property type="protein sequence ID" value="AAK26002.1"/>
    <property type="molecule type" value="mRNA"/>
</dbReference>
<dbReference type="PIR" id="T08925">
    <property type="entry name" value="T08925"/>
</dbReference>
<dbReference type="RefSeq" id="NP_194389.1">
    <property type="nucleotide sequence ID" value="NM_118793.3"/>
</dbReference>
<dbReference type="BioGRID" id="14053">
    <property type="interactions" value="1"/>
</dbReference>
<dbReference type="FunCoup" id="Q9SUA4">
    <property type="interactions" value="274"/>
</dbReference>
<dbReference type="STRING" id="3702.Q9SUA4"/>
<dbReference type="PaxDb" id="3702-AT4G26590.1"/>
<dbReference type="ProteomicsDB" id="248819"/>
<dbReference type="EnsemblPlants" id="AT4G26590.1">
    <property type="protein sequence ID" value="AT4G26590.1"/>
    <property type="gene ID" value="AT4G26590"/>
</dbReference>
<dbReference type="GeneID" id="828766"/>
<dbReference type="Gramene" id="AT4G26590.1">
    <property type="protein sequence ID" value="AT4G26590.1"/>
    <property type="gene ID" value="AT4G26590"/>
</dbReference>
<dbReference type="KEGG" id="ath:AT4G26590"/>
<dbReference type="Araport" id="AT4G26590"/>
<dbReference type="TAIR" id="AT4G26590">
    <property type="gene designation" value="OPT5"/>
</dbReference>
<dbReference type="eggNOG" id="KOG2262">
    <property type="taxonomic scope" value="Eukaryota"/>
</dbReference>
<dbReference type="HOGENOM" id="CLU_004965_0_1_1"/>
<dbReference type="InParanoid" id="Q9SUA4"/>
<dbReference type="OMA" id="WIPGVLW"/>
<dbReference type="PhylomeDB" id="Q9SUA4"/>
<dbReference type="PRO" id="PR:Q9SUA4"/>
<dbReference type="Proteomes" id="UP000006548">
    <property type="component" value="Chromosome 4"/>
</dbReference>
<dbReference type="ExpressionAtlas" id="Q9SUA4">
    <property type="expression patterns" value="baseline and differential"/>
</dbReference>
<dbReference type="GO" id="GO:0016020">
    <property type="term" value="C:membrane"/>
    <property type="evidence" value="ECO:0000250"/>
    <property type="project" value="TAIR"/>
</dbReference>
<dbReference type="GO" id="GO:0035673">
    <property type="term" value="F:oligopeptide transmembrane transporter activity"/>
    <property type="evidence" value="ECO:0007669"/>
    <property type="project" value="InterPro"/>
</dbReference>
<dbReference type="GO" id="GO:0015031">
    <property type="term" value="P:protein transport"/>
    <property type="evidence" value="ECO:0007669"/>
    <property type="project" value="UniProtKB-KW"/>
</dbReference>
<dbReference type="InterPro" id="IPR004648">
    <property type="entry name" value="Oligpept_transpt"/>
</dbReference>
<dbReference type="InterPro" id="IPR004813">
    <property type="entry name" value="OPT"/>
</dbReference>
<dbReference type="NCBIfam" id="TIGR00727">
    <property type="entry name" value="ISP4_OPT"/>
    <property type="match status" value="1"/>
</dbReference>
<dbReference type="NCBIfam" id="TIGR00728">
    <property type="entry name" value="OPT_sfam"/>
    <property type="match status" value="1"/>
</dbReference>
<dbReference type="PANTHER" id="PTHR22601">
    <property type="entry name" value="ISP4 LIKE PROTEIN"/>
    <property type="match status" value="1"/>
</dbReference>
<dbReference type="Pfam" id="PF03169">
    <property type="entry name" value="OPT"/>
    <property type="match status" value="1"/>
</dbReference>
<organism>
    <name type="scientific">Arabidopsis thaliana</name>
    <name type="common">Mouse-ear cress</name>
    <dbReference type="NCBI Taxonomy" id="3702"/>
    <lineage>
        <taxon>Eukaryota</taxon>
        <taxon>Viridiplantae</taxon>
        <taxon>Streptophyta</taxon>
        <taxon>Embryophyta</taxon>
        <taxon>Tracheophyta</taxon>
        <taxon>Spermatophyta</taxon>
        <taxon>Magnoliopsida</taxon>
        <taxon>eudicotyledons</taxon>
        <taxon>Gunneridae</taxon>
        <taxon>Pentapetalae</taxon>
        <taxon>rosids</taxon>
        <taxon>malvids</taxon>
        <taxon>Brassicales</taxon>
        <taxon>Brassicaceae</taxon>
        <taxon>Camelineae</taxon>
        <taxon>Arabidopsis</taxon>
    </lineage>
</organism>
<keyword id="KW-0472">Membrane</keyword>
<keyword id="KW-0571">Peptide transport</keyword>
<keyword id="KW-0653">Protein transport</keyword>
<keyword id="KW-1185">Reference proteome</keyword>
<keyword id="KW-0812">Transmembrane</keyword>
<keyword id="KW-1133">Transmembrane helix</keyword>
<keyword id="KW-0813">Transport</keyword>
<protein>
    <recommendedName>
        <fullName>Oligopeptide transporter 5</fullName>
        <shortName>AtOPT5</shortName>
    </recommendedName>
</protein>
<accession>Q9SUA4</accession>
<reference key="1">
    <citation type="journal article" date="1999" name="Nature">
        <title>Sequence and analysis of chromosome 4 of the plant Arabidopsis thaliana.</title>
        <authorList>
            <person name="Mayer K.F.X."/>
            <person name="Schueller C."/>
            <person name="Wambutt R."/>
            <person name="Murphy G."/>
            <person name="Volckaert G."/>
            <person name="Pohl T."/>
            <person name="Duesterhoeft A."/>
            <person name="Stiekema W."/>
            <person name="Entian K.-D."/>
            <person name="Terryn N."/>
            <person name="Harris B."/>
            <person name="Ansorge W."/>
            <person name="Brandt P."/>
            <person name="Grivell L.A."/>
            <person name="Rieger M."/>
            <person name="Weichselgartner M."/>
            <person name="de Simone V."/>
            <person name="Obermaier B."/>
            <person name="Mache R."/>
            <person name="Mueller M."/>
            <person name="Kreis M."/>
            <person name="Delseny M."/>
            <person name="Puigdomenech P."/>
            <person name="Watson M."/>
            <person name="Schmidtheini T."/>
            <person name="Reichert B."/>
            <person name="Portetelle D."/>
            <person name="Perez-Alonso M."/>
            <person name="Boutry M."/>
            <person name="Bancroft I."/>
            <person name="Vos P."/>
            <person name="Hoheisel J."/>
            <person name="Zimmermann W."/>
            <person name="Wedler H."/>
            <person name="Ridley P."/>
            <person name="Langham S.-A."/>
            <person name="McCullagh B."/>
            <person name="Bilham L."/>
            <person name="Robben J."/>
            <person name="van der Schueren J."/>
            <person name="Grymonprez B."/>
            <person name="Chuang Y.-J."/>
            <person name="Vandenbussche F."/>
            <person name="Braeken M."/>
            <person name="Weltjens I."/>
            <person name="Voet M."/>
            <person name="Bastiaens I."/>
            <person name="Aert R."/>
            <person name="Defoor E."/>
            <person name="Weitzenegger T."/>
            <person name="Bothe G."/>
            <person name="Ramsperger U."/>
            <person name="Hilbert H."/>
            <person name="Braun M."/>
            <person name="Holzer E."/>
            <person name="Brandt A."/>
            <person name="Peters S."/>
            <person name="van Staveren M."/>
            <person name="Dirkse W."/>
            <person name="Mooijman P."/>
            <person name="Klein Lankhorst R."/>
            <person name="Rose M."/>
            <person name="Hauf J."/>
            <person name="Koetter P."/>
            <person name="Berneiser S."/>
            <person name="Hempel S."/>
            <person name="Feldpausch M."/>
            <person name="Lamberth S."/>
            <person name="Van den Daele H."/>
            <person name="De Keyser A."/>
            <person name="Buysshaert C."/>
            <person name="Gielen J."/>
            <person name="Villarroel R."/>
            <person name="De Clercq R."/>
            <person name="van Montagu M."/>
            <person name="Rogers J."/>
            <person name="Cronin A."/>
            <person name="Quail M.A."/>
            <person name="Bray-Allen S."/>
            <person name="Clark L."/>
            <person name="Doggett J."/>
            <person name="Hall S."/>
            <person name="Kay M."/>
            <person name="Lennard N."/>
            <person name="McLay K."/>
            <person name="Mayes R."/>
            <person name="Pettett A."/>
            <person name="Rajandream M.A."/>
            <person name="Lyne M."/>
            <person name="Benes V."/>
            <person name="Rechmann S."/>
            <person name="Borkova D."/>
            <person name="Bloecker H."/>
            <person name="Scharfe M."/>
            <person name="Grimm M."/>
            <person name="Loehnert T.-H."/>
            <person name="Dose S."/>
            <person name="de Haan M."/>
            <person name="Maarse A.C."/>
            <person name="Schaefer M."/>
            <person name="Mueller-Auer S."/>
            <person name="Gabel C."/>
            <person name="Fuchs M."/>
            <person name="Fartmann B."/>
            <person name="Granderath K."/>
            <person name="Dauner D."/>
            <person name="Herzl A."/>
            <person name="Neumann S."/>
            <person name="Argiriou A."/>
            <person name="Vitale D."/>
            <person name="Liguori R."/>
            <person name="Piravandi E."/>
            <person name="Massenet O."/>
            <person name="Quigley F."/>
            <person name="Clabauld G."/>
            <person name="Muendlein A."/>
            <person name="Felber R."/>
            <person name="Schnabl S."/>
            <person name="Hiller R."/>
            <person name="Schmidt W."/>
            <person name="Lecharny A."/>
            <person name="Aubourg S."/>
            <person name="Chefdor F."/>
            <person name="Cooke R."/>
            <person name="Berger C."/>
            <person name="Monfort A."/>
            <person name="Casacuberta E."/>
            <person name="Gibbons T."/>
            <person name="Weber N."/>
            <person name="Vandenbol M."/>
            <person name="Bargues M."/>
            <person name="Terol J."/>
            <person name="Torres A."/>
            <person name="Perez-Perez A."/>
            <person name="Purnelle B."/>
            <person name="Bent E."/>
            <person name="Johnson S."/>
            <person name="Tacon D."/>
            <person name="Jesse T."/>
            <person name="Heijnen L."/>
            <person name="Schwarz S."/>
            <person name="Scholler P."/>
            <person name="Heber S."/>
            <person name="Francs P."/>
            <person name="Bielke C."/>
            <person name="Frishman D."/>
            <person name="Haase D."/>
            <person name="Lemcke K."/>
            <person name="Mewes H.-W."/>
            <person name="Stocker S."/>
            <person name="Zaccaria P."/>
            <person name="Bevan M."/>
            <person name="Wilson R.K."/>
            <person name="de la Bastide M."/>
            <person name="Habermann K."/>
            <person name="Parnell L."/>
            <person name="Dedhia N."/>
            <person name="Gnoj L."/>
            <person name="Schutz K."/>
            <person name="Huang E."/>
            <person name="Spiegel L."/>
            <person name="Sekhon M."/>
            <person name="Murray J."/>
            <person name="Sheet P."/>
            <person name="Cordes M."/>
            <person name="Abu-Threideh J."/>
            <person name="Stoneking T."/>
            <person name="Kalicki J."/>
            <person name="Graves T."/>
            <person name="Harmon G."/>
            <person name="Edwards J."/>
            <person name="Latreille P."/>
            <person name="Courtney L."/>
            <person name="Cloud J."/>
            <person name="Abbott A."/>
            <person name="Scott K."/>
            <person name="Johnson D."/>
            <person name="Minx P."/>
            <person name="Bentley D."/>
            <person name="Fulton B."/>
            <person name="Miller N."/>
            <person name="Greco T."/>
            <person name="Kemp K."/>
            <person name="Kramer J."/>
            <person name="Fulton L."/>
            <person name="Mardis E."/>
            <person name="Dante M."/>
            <person name="Pepin K."/>
            <person name="Hillier L.W."/>
            <person name="Nelson J."/>
            <person name="Spieth J."/>
            <person name="Ryan E."/>
            <person name="Andrews S."/>
            <person name="Geisel C."/>
            <person name="Layman D."/>
            <person name="Du H."/>
            <person name="Ali J."/>
            <person name="Berghoff A."/>
            <person name="Jones K."/>
            <person name="Drone K."/>
            <person name="Cotton M."/>
            <person name="Joshu C."/>
            <person name="Antonoiu B."/>
            <person name="Zidanic M."/>
            <person name="Strong C."/>
            <person name="Sun H."/>
            <person name="Lamar B."/>
            <person name="Yordan C."/>
            <person name="Ma P."/>
            <person name="Zhong J."/>
            <person name="Preston R."/>
            <person name="Vil D."/>
            <person name="Shekher M."/>
            <person name="Matero A."/>
            <person name="Shah R."/>
            <person name="Swaby I.K."/>
            <person name="O'Shaughnessy A."/>
            <person name="Rodriguez M."/>
            <person name="Hoffman J."/>
            <person name="Till S."/>
            <person name="Granat S."/>
            <person name="Shohdy N."/>
            <person name="Hasegawa A."/>
            <person name="Hameed A."/>
            <person name="Lodhi M."/>
            <person name="Johnson A."/>
            <person name="Chen E."/>
            <person name="Marra M.A."/>
            <person name="Martienssen R."/>
            <person name="McCombie W.R."/>
        </authorList>
    </citation>
    <scope>NUCLEOTIDE SEQUENCE [LARGE SCALE GENOMIC DNA]</scope>
    <source>
        <strain>cv. Columbia</strain>
    </source>
</reference>
<reference key="2">
    <citation type="journal article" date="2017" name="Plant J.">
        <title>Araport11: a complete reannotation of the Arabidopsis thaliana reference genome.</title>
        <authorList>
            <person name="Cheng C.Y."/>
            <person name="Krishnakumar V."/>
            <person name="Chan A.P."/>
            <person name="Thibaud-Nissen F."/>
            <person name="Schobel S."/>
            <person name="Town C.D."/>
        </authorList>
    </citation>
    <scope>GENOME REANNOTATION</scope>
    <source>
        <strain>cv. Columbia</strain>
    </source>
</reference>
<reference key="3">
    <citation type="journal article" date="2003" name="Science">
        <title>Empirical analysis of transcriptional activity in the Arabidopsis genome.</title>
        <authorList>
            <person name="Yamada K."/>
            <person name="Lim J."/>
            <person name="Dale J.M."/>
            <person name="Chen H."/>
            <person name="Shinn P."/>
            <person name="Palm C.J."/>
            <person name="Southwick A.M."/>
            <person name="Wu H.C."/>
            <person name="Kim C.J."/>
            <person name="Nguyen M."/>
            <person name="Pham P.K."/>
            <person name="Cheuk R.F."/>
            <person name="Karlin-Newmann G."/>
            <person name="Liu S.X."/>
            <person name="Lam B."/>
            <person name="Sakano H."/>
            <person name="Wu T."/>
            <person name="Yu G."/>
            <person name="Miranda M."/>
            <person name="Quach H.L."/>
            <person name="Tripp M."/>
            <person name="Chang C.H."/>
            <person name="Lee J.M."/>
            <person name="Toriumi M.J."/>
            <person name="Chan M.M."/>
            <person name="Tang C.C."/>
            <person name="Onodera C.S."/>
            <person name="Deng J.M."/>
            <person name="Akiyama K."/>
            <person name="Ansari Y."/>
            <person name="Arakawa T."/>
            <person name="Banh J."/>
            <person name="Banno F."/>
            <person name="Bowser L."/>
            <person name="Brooks S.Y."/>
            <person name="Carninci P."/>
            <person name="Chao Q."/>
            <person name="Choy N."/>
            <person name="Enju A."/>
            <person name="Goldsmith A.D."/>
            <person name="Gurjal M."/>
            <person name="Hansen N.F."/>
            <person name="Hayashizaki Y."/>
            <person name="Johnson-Hopson C."/>
            <person name="Hsuan V.W."/>
            <person name="Iida K."/>
            <person name="Karnes M."/>
            <person name="Khan S."/>
            <person name="Koesema E."/>
            <person name="Ishida J."/>
            <person name="Jiang P.X."/>
            <person name="Jones T."/>
            <person name="Kawai J."/>
            <person name="Kamiya A."/>
            <person name="Meyers C."/>
            <person name="Nakajima M."/>
            <person name="Narusaka M."/>
            <person name="Seki M."/>
            <person name="Sakurai T."/>
            <person name="Satou M."/>
            <person name="Tamse R."/>
            <person name="Vaysberg M."/>
            <person name="Wallender E.K."/>
            <person name="Wong C."/>
            <person name="Yamamura Y."/>
            <person name="Yuan S."/>
            <person name="Shinozaki K."/>
            <person name="Davis R.W."/>
            <person name="Theologis A."/>
            <person name="Ecker J.R."/>
        </authorList>
    </citation>
    <scope>NUCLEOTIDE SEQUENCE [LARGE SCALE MRNA]</scope>
    <source>
        <strain>cv. Columbia</strain>
    </source>
</reference>
<reference key="4">
    <citation type="journal article" date="2002" name="Plant Physiol.">
        <title>An oligopeptide transporter gene family in Arabidopsis.</title>
        <authorList>
            <person name="Koh S."/>
            <person name="Wiles A.M."/>
            <person name="Sharp J.S."/>
            <person name="Naider F.R."/>
            <person name="Becker J.M."/>
            <person name="Stacey G."/>
        </authorList>
    </citation>
    <scope>FUNCTION</scope>
    <scope>NOMENCLATURE</scope>
    <scope>TISSUE SPECIFICITY</scope>
</reference>
<gene>
    <name type="primary">OPT5</name>
    <name type="ordered locus">At4g26590</name>
    <name type="ORF">T15N24.40</name>
</gene>
<sequence>MVGSLEVSKPPEHKVESKIVIADEEEEDENDSPIEEVRLTVPITDDPSLPVLTFRTWFLGMVSCVVLAFVNNFFGYRSNPLTVSSVVAQIITLPLGKLMATTLPTTKLRLPGTNWSCSLNPGPFNMKEHVLITIFANTGAGGAYATSILTIVKAFYHRNLNPAAAMLLVQTTQLLGYGWAGMFRKYLVDSPYMWWPANLVQVSLFRALHEKEEKREGKQTKLRFFLIVFFLSFTYYIVPGYLFPSISYLSFVCWIWTRSVTAQQIGSGLHGLGIGSFGLDWSTVAGFLGSPLAVPFFAIANSFGGFIIFFYIILPIFYWSNAYEAKKFPFYTSHPFDHTGQRYNTTRILNQKTFNIDLPAYESYSKLYLSILFALIYGLSFGTLTATISHVALFDGKFIWELWKKATLTTKDKFGDVHTRLMKKNYKEVPQWWFVAVLAASFVLALYACEGFGKQLQLPWWGLLLACAIAFTFTLPIGVILATTNQRMGLNVISELIIGFLYPGKPLANVAFKTYGSVSIAQALYFVGDFKLGHYMKIPPRSMFIVQLVATIVASTVSFGTTWWLLSSVENICNTDMLPKSSPWTCPGDVVFYNASIIWGIIGPGRMFTSKGIYPGMNWFFLIGFLAPVPVWFFARKFPEKKWIHQIHIPLIFSGANVMPMAKAVHYWSWFAVGIVFNYYIFRRYKGWWARHNYILSAALDAGTAVMGVLIYFALQNNNISLPDWWGNENTDHCPLANCPTEKGIVAKGCPVF</sequence>
<feature type="chain" id="PRO_0000213782" description="Oligopeptide transporter 5">
    <location>
        <begin position="1"/>
        <end position="753"/>
    </location>
</feature>
<feature type="transmembrane region" description="Helical" evidence="1">
    <location>
        <begin position="56"/>
        <end position="76"/>
    </location>
</feature>
<feature type="transmembrane region" description="Helical" evidence="1">
    <location>
        <begin position="80"/>
        <end position="100"/>
    </location>
</feature>
<feature type="transmembrane region" description="Helical" evidence="1">
    <location>
        <begin position="132"/>
        <end position="152"/>
    </location>
</feature>
<feature type="transmembrane region" description="Helical" evidence="1">
    <location>
        <begin position="163"/>
        <end position="183"/>
    </location>
</feature>
<feature type="transmembrane region" description="Helical" evidence="1">
    <location>
        <begin position="224"/>
        <end position="244"/>
    </location>
</feature>
<feature type="transmembrane region" description="Helical" evidence="1">
    <location>
        <begin position="296"/>
        <end position="316"/>
    </location>
</feature>
<feature type="transmembrane region" description="Helical" evidence="1">
    <location>
        <begin position="368"/>
        <end position="388"/>
    </location>
</feature>
<feature type="transmembrane region" description="Helical" evidence="1">
    <location>
        <begin position="432"/>
        <end position="452"/>
    </location>
</feature>
<feature type="transmembrane region" description="Helical" evidence="1">
    <location>
        <begin position="461"/>
        <end position="481"/>
    </location>
</feature>
<feature type="transmembrane region" description="Helical" evidence="1">
    <location>
        <begin position="506"/>
        <end position="528"/>
    </location>
</feature>
<feature type="transmembrane region" description="Helical" evidence="1">
    <location>
        <begin position="544"/>
        <end position="564"/>
    </location>
</feature>
<feature type="transmembrane region" description="Helical" evidence="1">
    <location>
        <begin position="583"/>
        <end position="603"/>
    </location>
</feature>
<feature type="transmembrane region" description="Helical" evidence="1">
    <location>
        <begin position="615"/>
        <end position="635"/>
    </location>
</feature>
<feature type="transmembrane region" description="Helical" evidence="1">
    <location>
        <begin position="662"/>
        <end position="682"/>
    </location>
</feature>
<feature type="transmembrane region" description="Helical" evidence="1">
    <location>
        <begin position="695"/>
        <end position="715"/>
    </location>
</feature>
<proteinExistence type="evidence at transcript level"/>